<name>CYB_PARRA</name>
<dbReference type="EMBL" id="U25738">
    <property type="protein sequence ID" value="AAB38164.1"/>
    <property type="molecule type" value="Genomic_DNA"/>
</dbReference>
<dbReference type="EMBL" id="U15204">
    <property type="protein sequence ID" value="AAB38154.1"/>
    <property type="molecule type" value="Genomic_DNA"/>
</dbReference>
<dbReference type="SMR" id="Q37078"/>
<dbReference type="GO" id="GO:0005743">
    <property type="term" value="C:mitochondrial inner membrane"/>
    <property type="evidence" value="ECO:0007669"/>
    <property type="project" value="UniProtKB-SubCell"/>
</dbReference>
<dbReference type="GO" id="GO:0045275">
    <property type="term" value="C:respiratory chain complex III"/>
    <property type="evidence" value="ECO:0007669"/>
    <property type="project" value="InterPro"/>
</dbReference>
<dbReference type="GO" id="GO:0046872">
    <property type="term" value="F:metal ion binding"/>
    <property type="evidence" value="ECO:0007669"/>
    <property type="project" value="UniProtKB-KW"/>
</dbReference>
<dbReference type="GO" id="GO:0008121">
    <property type="term" value="F:ubiquinol-cytochrome-c reductase activity"/>
    <property type="evidence" value="ECO:0007669"/>
    <property type="project" value="InterPro"/>
</dbReference>
<dbReference type="GO" id="GO:0006122">
    <property type="term" value="P:mitochondrial electron transport, ubiquinol to cytochrome c"/>
    <property type="evidence" value="ECO:0007669"/>
    <property type="project" value="TreeGrafter"/>
</dbReference>
<dbReference type="CDD" id="cd00290">
    <property type="entry name" value="cytochrome_b_C"/>
    <property type="match status" value="1"/>
</dbReference>
<dbReference type="CDD" id="cd00284">
    <property type="entry name" value="Cytochrome_b_N"/>
    <property type="match status" value="1"/>
</dbReference>
<dbReference type="FunFam" id="1.20.810.10:FF:000002">
    <property type="entry name" value="Cytochrome b"/>
    <property type="match status" value="1"/>
</dbReference>
<dbReference type="Gene3D" id="1.20.810.10">
    <property type="entry name" value="Cytochrome Bc1 Complex, Chain C"/>
    <property type="match status" value="1"/>
</dbReference>
<dbReference type="InterPro" id="IPR005798">
    <property type="entry name" value="Cyt_b/b6_C"/>
</dbReference>
<dbReference type="InterPro" id="IPR036150">
    <property type="entry name" value="Cyt_b/b6_C_sf"/>
</dbReference>
<dbReference type="InterPro" id="IPR005797">
    <property type="entry name" value="Cyt_b/b6_N"/>
</dbReference>
<dbReference type="InterPro" id="IPR027387">
    <property type="entry name" value="Cytb/b6-like_sf"/>
</dbReference>
<dbReference type="InterPro" id="IPR030689">
    <property type="entry name" value="Cytochrome_b"/>
</dbReference>
<dbReference type="InterPro" id="IPR048260">
    <property type="entry name" value="Cytochrome_b_C_euk/bac"/>
</dbReference>
<dbReference type="InterPro" id="IPR048259">
    <property type="entry name" value="Cytochrome_b_N_euk/bac"/>
</dbReference>
<dbReference type="InterPro" id="IPR016174">
    <property type="entry name" value="Di-haem_cyt_TM"/>
</dbReference>
<dbReference type="PANTHER" id="PTHR19271">
    <property type="entry name" value="CYTOCHROME B"/>
    <property type="match status" value="1"/>
</dbReference>
<dbReference type="PANTHER" id="PTHR19271:SF16">
    <property type="entry name" value="CYTOCHROME B"/>
    <property type="match status" value="1"/>
</dbReference>
<dbReference type="Pfam" id="PF00032">
    <property type="entry name" value="Cytochrom_B_C"/>
    <property type="match status" value="1"/>
</dbReference>
<dbReference type="Pfam" id="PF00033">
    <property type="entry name" value="Cytochrome_B"/>
    <property type="match status" value="1"/>
</dbReference>
<dbReference type="PIRSF" id="PIRSF038885">
    <property type="entry name" value="COB"/>
    <property type="match status" value="1"/>
</dbReference>
<dbReference type="SUPFAM" id="SSF81648">
    <property type="entry name" value="a domain/subunit of cytochrome bc1 complex (Ubiquinol-cytochrome c reductase)"/>
    <property type="match status" value="1"/>
</dbReference>
<dbReference type="SUPFAM" id="SSF81342">
    <property type="entry name" value="Transmembrane di-heme cytochromes"/>
    <property type="match status" value="1"/>
</dbReference>
<dbReference type="PROSITE" id="PS51003">
    <property type="entry name" value="CYTB_CTER"/>
    <property type="match status" value="1"/>
</dbReference>
<dbReference type="PROSITE" id="PS51002">
    <property type="entry name" value="CYTB_NTER"/>
    <property type="match status" value="1"/>
</dbReference>
<evidence type="ECO:0000250" key="1"/>
<evidence type="ECO:0000250" key="2">
    <source>
        <dbReference type="UniProtKB" id="P00157"/>
    </source>
</evidence>
<evidence type="ECO:0000255" key="3">
    <source>
        <dbReference type="PROSITE-ProRule" id="PRU00967"/>
    </source>
</evidence>
<evidence type="ECO:0000255" key="4">
    <source>
        <dbReference type="PROSITE-ProRule" id="PRU00968"/>
    </source>
</evidence>
<proteinExistence type="inferred from homology"/>
<geneLocation type="mitochondrion"/>
<organism>
    <name type="scientific">Paradisaea raggiana</name>
    <name type="common">Raggiana bird-of-paradise</name>
    <dbReference type="NCBI Taxonomy" id="36268"/>
    <lineage>
        <taxon>Eukaryota</taxon>
        <taxon>Metazoa</taxon>
        <taxon>Chordata</taxon>
        <taxon>Craniata</taxon>
        <taxon>Vertebrata</taxon>
        <taxon>Euteleostomi</taxon>
        <taxon>Archelosauria</taxon>
        <taxon>Archosauria</taxon>
        <taxon>Dinosauria</taxon>
        <taxon>Saurischia</taxon>
        <taxon>Theropoda</taxon>
        <taxon>Coelurosauria</taxon>
        <taxon>Aves</taxon>
        <taxon>Neognathae</taxon>
        <taxon>Neoaves</taxon>
        <taxon>Telluraves</taxon>
        <taxon>Australaves</taxon>
        <taxon>Passeriformes</taxon>
        <taxon>Corvoidea</taxon>
        <taxon>Paradisaeidae</taxon>
        <taxon>Paradisaea</taxon>
    </lineage>
</organism>
<comment type="function">
    <text evidence="2">Component of the ubiquinol-cytochrome c reductase complex (complex III or cytochrome b-c1 complex) that is part of the mitochondrial respiratory chain. The b-c1 complex mediates electron transfer from ubiquinol to cytochrome c. Contributes to the generation of a proton gradient across the mitochondrial membrane that is then used for ATP synthesis.</text>
</comment>
<comment type="cofactor">
    <cofactor evidence="2">
        <name>heme b</name>
        <dbReference type="ChEBI" id="CHEBI:60344"/>
    </cofactor>
    <text evidence="2">Binds 2 heme b groups non-covalently.</text>
</comment>
<comment type="subunit">
    <text evidence="2">The cytochrome bc1 complex contains 11 subunits: 3 respiratory subunits (MT-CYB, CYC1 and UQCRFS1), 2 core proteins (UQCRC1 and UQCRC2) and 6 low-molecular weight proteins (UQCRH/QCR6, UQCRB/QCR7, UQCRQ/QCR8, UQCR10/QCR9, UQCR11/QCR10 and a cleavage product of UQCRFS1). This cytochrome bc1 complex then forms a dimer.</text>
</comment>
<comment type="subcellular location">
    <subcellularLocation>
        <location evidence="2">Mitochondrion inner membrane</location>
        <topology evidence="2">Multi-pass membrane protein</topology>
    </subcellularLocation>
</comment>
<comment type="miscellaneous">
    <text evidence="1">Heme 1 (or BL or b562) is low-potential and absorbs at about 562 nm, and heme 2 (or BH or b566) is high-potential and absorbs at about 566 nm.</text>
</comment>
<comment type="similarity">
    <text evidence="3 4">Belongs to the cytochrome b family.</text>
</comment>
<comment type="caution">
    <text evidence="2">The full-length protein contains only eight transmembrane helices, not nine as predicted by bioinformatics tools.</text>
</comment>
<accession>Q37078</accession>
<protein>
    <recommendedName>
        <fullName>Cytochrome b</fullName>
    </recommendedName>
    <alternativeName>
        <fullName>Complex III subunit 3</fullName>
    </alternativeName>
    <alternativeName>
        <fullName>Complex III subunit III</fullName>
    </alternativeName>
    <alternativeName>
        <fullName>Cytochrome b-c1 complex subunit 3</fullName>
    </alternativeName>
    <alternativeName>
        <fullName>Ubiquinol-cytochrome-c reductase complex cytochrome b subunit</fullName>
    </alternativeName>
</protein>
<sequence>MALNLRKNHPLLKIINDSLIDLPTPSNISIWWNFGSLLGICLVTQIITGLLLAAHYTADTSLAFNSVAHMCRNVQFGWLIRNLHANGASLFFICIYLHIGRGFYYGSYLNKETWNIGVILLLTLMATAFVGYVLPWGQMSFWGATVITNLFSAIPYIGQTLVEWAWGGFSVDNPTLTRFFALHFLLPFVIAGLTLVHLTFLHETGSNNPLGIPSDCDKIPFHPYYSIKDILGFALMLISLATLALFSPNLLGDPENFTPANPLATPPHIKPEWYFLFAYAILRSIPNKLGGVLALAASVLILFLIPLLHTSKQRSMTFRPLSQILFWILVTDLLILTWVGSQPVEHPFIIIGQLASFLYFMIILVLFPIVGALENKLLNL</sequence>
<gene>
    <name type="primary">MT-CYB</name>
    <name type="synonym">COB</name>
    <name type="synonym">CYTB</name>
    <name type="synonym">MTCYB</name>
</gene>
<feature type="chain" id="PRO_0000061355" description="Cytochrome b">
    <location>
        <begin position="1"/>
        <end position="380"/>
    </location>
</feature>
<feature type="transmembrane region" description="Helical" evidence="2">
    <location>
        <begin position="34"/>
        <end position="54"/>
    </location>
</feature>
<feature type="transmembrane region" description="Helical" evidence="2">
    <location>
        <begin position="78"/>
        <end position="99"/>
    </location>
</feature>
<feature type="transmembrane region" description="Helical" evidence="2">
    <location>
        <begin position="114"/>
        <end position="134"/>
    </location>
</feature>
<feature type="transmembrane region" description="Helical" evidence="2">
    <location>
        <begin position="179"/>
        <end position="199"/>
    </location>
</feature>
<feature type="transmembrane region" description="Helical" evidence="2">
    <location>
        <begin position="227"/>
        <end position="247"/>
    </location>
</feature>
<feature type="transmembrane region" description="Helical" evidence="2">
    <location>
        <begin position="289"/>
        <end position="309"/>
    </location>
</feature>
<feature type="transmembrane region" description="Helical" evidence="2">
    <location>
        <begin position="321"/>
        <end position="341"/>
    </location>
</feature>
<feature type="transmembrane region" description="Helical" evidence="2">
    <location>
        <begin position="348"/>
        <end position="368"/>
    </location>
</feature>
<feature type="binding site" description="axial binding residue" evidence="2">
    <location>
        <position position="84"/>
    </location>
    <ligand>
        <name>heme b</name>
        <dbReference type="ChEBI" id="CHEBI:60344"/>
        <label>b562</label>
    </ligand>
    <ligandPart>
        <name>Fe</name>
        <dbReference type="ChEBI" id="CHEBI:18248"/>
    </ligandPart>
</feature>
<feature type="binding site" description="axial binding residue" evidence="2">
    <location>
        <position position="98"/>
    </location>
    <ligand>
        <name>heme b</name>
        <dbReference type="ChEBI" id="CHEBI:60344"/>
        <label>b566</label>
    </ligand>
    <ligandPart>
        <name>Fe</name>
        <dbReference type="ChEBI" id="CHEBI:18248"/>
    </ligandPart>
</feature>
<feature type="binding site" description="axial binding residue" evidence="2">
    <location>
        <position position="183"/>
    </location>
    <ligand>
        <name>heme b</name>
        <dbReference type="ChEBI" id="CHEBI:60344"/>
        <label>b562</label>
    </ligand>
    <ligandPart>
        <name>Fe</name>
        <dbReference type="ChEBI" id="CHEBI:18248"/>
    </ligandPart>
</feature>
<feature type="binding site" description="axial binding residue" evidence="2">
    <location>
        <position position="197"/>
    </location>
    <ligand>
        <name>heme b</name>
        <dbReference type="ChEBI" id="CHEBI:60344"/>
        <label>b566</label>
    </ligand>
    <ligandPart>
        <name>Fe</name>
        <dbReference type="ChEBI" id="CHEBI:18248"/>
    </ligandPart>
</feature>
<feature type="binding site" evidence="2">
    <location>
        <position position="202"/>
    </location>
    <ligand>
        <name>a ubiquinone</name>
        <dbReference type="ChEBI" id="CHEBI:16389"/>
    </ligand>
</feature>
<reference key="1">
    <citation type="journal article" date="1996" name="Mol. Phylogenet. Evol.">
        <title>Phylogenetic relationships among the major lineages of the birds-of-paradise (paradisaeidae) using mitochondrial DNA gene sequences.</title>
        <authorList>
            <person name="Nunn G.B."/>
            <person name="Cracraft J."/>
        </authorList>
    </citation>
    <scope>NUCLEOTIDE SEQUENCE [GENOMIC DNA]</scope>
    <source>
        <strain>Isolate ISIS #489241</strain>
    </source>
</reference>
<keyword id="KW-0249">Electron transport</keyword>
<keyword id="KW-0349">Heme</keyword>
<keyword id="KW-0408">Iron</keyword>
<keyword id="KW-0472">Membrane</keyword>
<keyword id="KW-0479">Metal-binding</keyword>
<keyword id="KW-0496">Mitochondrion</keyword>
<keyword id="KW-0999">Mitochondrion inner membrane</keyword>
<keyword id="KW-0679">Respiratory chain</keyword>
<keyword id="KW-0812">Transmembrane</keyword>
<keyword id="KW-1133">Transmembrane helix</keyword>
<keyword id="KW-0813">Transport</keyword>
<keyword id="KW-0830">Ubiquinone</keyword>